<dbReference type="EC" id="2.4.2.17"/>
<dbReference type="EMBL" id="X13464">
    <property type="protein sequence ID" value="CAA31822.1"/>
    <property type="molecule type" value="Genomic_DNA"/>
</dbReference>
<dbReference type="EMBL" id="J01804">
    <property type="protein sequence ID" value="AAA88614.1"/>
    <property type="molecule type" value="Genomic_DNA"/>
</dbReference>
<dbReference type="EMBL" id="M28367">
    <property type="protein sequence ID" value="AAA27142.1"/>
    <property type="molecule type" value="Genomic_DNA"/>
</dbReference>
<dbReference type="EMBL" id="AE006468">
    <property type="protein sequence ID" value="AAL20975.1"/>
    <property type="molecule type" value="Genomic_DNA"/>
</dbReference>
<dbReference type="EMBL" id="V01371">
    <property type="protein sequence ID" value="CAA24657.1"/>
    <property type="molecule type" value="Genomic_DNA"/>
</dbReference>
<dbReference type="PIR" id="JS0156">
    <property type="entry name" value="XREBT"/>
</dbReference>
<dbReference type="RefSeq" id="NP_461016.1">
    <property type="nucleotide sequence ID" value="NC_003197.2"/>
</dbReference>
<dbReference type="RefSeq" id="WP_000886603.1">
    <property type="nucleotide sequence ID" value="NC_003197.2"/>
</dbReference>
<dbReference type="SMR" id="P00499"/>
<dbReference type="STRING" id="99287.STM2071"/>
<dbReference type="PaxDb" id="99287-STM2071"/>
<dbReference type="GeneID" id="1253592"/>
<dbReference type="KEGG" id="stm:STM2071"/>
<dbReference type="PATRIC" id="fig|99287.12.peg.2193"/>
<dbReference type="HOGENOM" id="CLU_038115_1_0_6"/>
<dbReference type="PhylomeDB" id="P00499"/>
<dbReference type="BioCyc" id="SENT99287:STM2071-MONOMER"/>
<dbReference type="UniPathway" id="UPA00031">
    <property type="reaction ID" value="UER00006"/>
</dbReference>
<dbReference type="Proteomes" id="UP000001014">
    <property type="component" value="Chromosome"/>
</dbReference>
<dbReference type="GO" id="GO:0005737">
    <property type="term" value="C:cytoplasm"/>
    <property type="evidence" value="ECO:0007669"/>
    <property type="project" value="UniProtKB-SubCell"/>
</dbReference>
<dbReference type="GO" id="GO:0005524">
    <property type="term" value="F:ATP binding"/>
    <property type="evidence" value="ECO:0007669"/>
    <property type="project" value="UniProtKB-KW"/>
</dbReference>
<dbReference type="GO" id="GO:0003879">
    <property type="term" value="F:ATP phosphoribosyltransferase activity"/>
    <property type="evidence" value="ECO:0000318"/>
    <property type="project" value="GO_Central"/>
</dbReference>
<dbReference type="GO" id="GO:0000287">
    <property type="term" value="F:magnesium ion binding"/>
    <property type="evidence" value="ECO:0007669"/>
    <property type="project" value="UniProtKB-UniRule"/>
</dbReference>
<dbReference type="GO" id="GO:0000105">
    <property type="term" value="P:L-histidine biosynthetic process"/>
    <property type="evidence" value="ECO:0000318"/>
    <property type="project" value="GO_Central"/>
</dbReference>
<dbReference type="CDD" id="cd13592">
    <property type="entry name" value="PBP2_HisGL2"/>
    <property type="match status" value="1"/>
</dbReference>
<dbReference type="FunFam" id="3.30.70.120:FF:000002">
    <property type="entry name" value="ATP phosphoribosyltransferase"/>
    <property type="match status" value="1"/>
</dbReference>
<dbReference type="FunFam" id="3.40.190.10:FF:000008">
    <property type="entry name" value="ATP phosphoribosyltransferase"/>
    <property type="match status" value="1"/>
</dbReference>
<dbReference type="Gene3D" id="3.30.70.120">
    <property type="match status" value="1"/>
</dbReference>
<dbReference type="Gene3D" id="3.40.190.10">
    <property type="entry name" value="Periplasmic binding protein-like II"/>
    <property type="match status" value="2"/>
</dbReference>
<dbReference type="HAMAP" id="MF_00079">
    <property type="entry name" value="HisG_Long"/>
    <property type="match status" value="1"/>
</dbReference>
<dbReference type="InterPro" id="IPR020621">
    <property type="entry name" value="ATP-PRT_HisG_long"/>
</dbReference>
<dbReference type="InterPro" id="IPR013820">
    <property type="entry name" value="ATP_PRibTrfase_cat"/>
</dbReference>
<dbReference type="InterPro" id="IPR018198">
    <property type="entry name" value="ATP_PRibTrfase_CS"/>
</dbReference>
<dbReference type="InterPro" id="IPR001348">
    <property type="entry name" value="ATP_PRibTrfase_HisG"/>
</dbReference>
<dbReference type="InterPro" id="IPR013115">
    <property type="entry name" value="HisG_C"/>
</dbReference>
<dbReference type="InterPro" id="IPR011322">
    <property type="entry name" value="N-reg_PII-like_a/b"/>
</dbReference>
<dbReference type="InterPro" id="IPR015867">
    <property type="entry name" value="N-reg_PII/ATP_PRibTrfase_C"/>
</dbReference>
<dbReference type="NCBIfam" id="TIGR00070">
    <property type="entry name" value="hisG"/>
    <property type="match status" value="1"/>
</dbReference>
<dbReference type="NCBIfam" id="TIGR03455">
    <property type="entry name" value="HisG_C-term"/>
    <property type="match status" value="1"/>
</dbReference>
<dbReference type="PANTHER" id="PTHR21403:SF8">
    <property type="entry name" value="ATP PHOSPHORIBOSYLTRANSFERASE"/>
    <property type="match status" value="1"/>
</dbReference>
<dbReference type="PANTHER" id="PTHR21403">
    <property type="entry name" value="ATP PHOSPHORIBOSYLTRANSFERASE ATP-PRTASE"/>
    <property type="match status" value="1"/>
</dbReference>
<dbReference type="Pfam" id="PF01634">
    <property type="entry name" value="HisG"/>
    <property type="match status" value="1"/>
</dbReference>
<dbReference type="Pfam" id="PF08029">
    <property type="entry name" value="HisG_C"/>
    <property type="match status" value="1"/>
</dbReference>
<dbReference type="SUPFAM" id="SSF54913">
    <property type="entry name" value="GlnB-like"/>
    <property type="match status" value="1"/>
</dbReference>
<dbReference type="SUPFAM" id="SSF53850">
    <property type="entry name" value="Periplasmic binding protein-like II"/>
    <property type="match status" value="1"/>
</dbReference>
<dbReference type="PROSITE" id="PS01316">
    <property type="entry name" value="ATP_P_PHORIBOSYLTR"/>
    <property type="match status" value="1"/>
</dbReference>
<evidence type="ECO:0000250" key="1"/>
<evidence type="ECO:0000269" key="2">
    <source>
    </source>
</evidence>
<evidence type="ECO:0000305" key="3"/>
<evidence type="ECO:0000305" key="4">
    <source>
    </source>
</evidence>
<comment type="function">
    <text evidence="1">Catalyzes the condensation of ATP and 5-phosphoribose 1-diphosphate to form N'-(5'-phosphoribosyl)-ATP (PR-ATP). Has a crucial role in the pathway because the rate of histidine biosynthesis seems to be controlled primarily by regulation of HisG enzymatic activity (By similarity).</text>
</comment>
<comment type="catalytic activity">
    <reaction evidence="2">
        <text>1-(5-phospho-beta-D-ribosyl)-ATP + diphosphate = 5-phospho-alpha-D-ribose 1-diphosphate + ATP</text>
        <dbReference type="Rhea" id="RHEA:18473"/>
        <dbReference type="ChEBI" id="CHEBI:30616"/>
        <dbReference type="ChEBI" id="CHEBI:33019"/>
        <dbReference type="ChEBI" id="CHEBI:58017"/>
        <dbReference type="ChEBI" id="CHEBI:73183"/>
        <dbReference type="EC" id="2.4.2.17"/>
    </reaction>
</comment>
<comment type="cofactor">
    <cofactor evidence="2">
        <name>Mg(2+)</name>
        <dbReference type="ChEBI" id="CHEBI:18420"/>
    </cofactor>
</comment>
<comment type="activity regulation">
    <text>Feedback inhibited by histidine. Also inhibited by AMP and ADP.</text>
</comment>
<comment type="pathway">
    <text>Amino-acid biosynthesis; L-histidine biosynthesis; L-histidine from 5-phospho-alpha-D-ribose 1-diphosphate: step 1/9.</text>
</comment>
<comment type="subunit">
    <text evidence="4">Equilibrium between an active dimeric form, an inactive hexameric form and higher aggregates. Interconversion between the various forms is largely reversible and is influenced by the natural substrates and inhibitors of the enzyme (Probable).</text>
</comment>
<comment type="subcellular location">
    <subcellularLocation>
        <location>Cytoplasm</location>
    </subcellularLocation>
</comment>
<comment type="induction">
    <text>Repressed by ppGpp in the presence of histidine.</text>
</comment>
<comment type="similarity">
    <text evidence="3">Belongs to the ATP phosphoribosyltransferase family. Long subfamily.</text>
</comment>
<protein>
    <recommendedName>
        <fullName>ATP phosphoribosyltransferase</fullName>
        <shortName>ATP-PRT</shortName>
        <shortName>ATP-PRTase</shortName>
        <ecNumber>2.4.2.17</ecNumber>
    </recommendedName>
</protein>
<proteinExistence type="evidence at protein level"/>
<name>HIS1_SALTY</name>
<accession>P00499</accession>
<organism>
    <name type="scientific">Salmonella typhimurium (strain LT2 / SGSC1412 / ATCC 700720)</name>
    <dbReference type="NCBI Taxonomy" id="99287"/>
    <lineage>
        <taxon>Bacteria</taxon>
        <taxon>Pseudomonadati</taxon>
        <taxon>Pseudomonadota</taxon>
        <taxon>Gammaproteobacteria</taxon>
        <taxon>Enterobacterales</taxon>
        <taxon>Enterobacteriaceae</taxon>
        <taxon>Salmonella</taxon>
    </lineage>
</organism>
<feature type="chain" id="PRO_0000151864" description="ATP phosphoribosyltransferase">
    <location>
        <begin position="1"/>
        <end position="299"/>
    </location>
</feature>
<gene>
    <name type="primary">hisG</name>
    <name type="ordered locus">STM2071</name>
</gene>
<sequence length="299" mass="33212">MLDNTRLRIAIQKSGRLSDDSRELLARCGIKINLHTQRLIAMAENMPIDILRVRDDDIPGLVMDGVVDLGIIGENVLEEELLNRRAQGEDPRYLTLRRLDFGGCRLSLATPVDEAWDGPAALDGKRIATSYPHLLKRYLDQKGVSFKSCLLNGSVEVAPRAGLADAICDLVSTGATLEANGLREVEVIYRSKACLIQRDGEMAQSKQELIDKLLTRIQGVIQARESKYIMMHAPSERLEEVIALLPGAERPTILPLAGEQQRVAMHMVSSETLFWETMEKLKALGASSILVLPIEKMME</sequence>
<keyword id="KW-0028">Amino-acid biosynthesis</keyword>
<keyword id="KW-0067">ATP-binding</keyword>
<keyword id="KW-0963">Cytoplasm</keyword>
<keyword id="KW-0903">Direct protein sequencing</keyword>
<keyword id="KW-0328">Glycosyltransferase</keyword>
<keyword id="KW-0368">Histidine biosynthesis</keyword>
<keyword id="KW-0460">Magnesium</keyword>
<keyword id="KW-0479">Metal-binding</keyword>
<keyword id="KW-0547">Nucleotide-binding</keyword>
<keyword id="KW-1185">Reference proteome</keyword>
<keyword id="KW-0808">Transferase</keyword>
<reference key="1">
    <citation type="journal article" date="1979" name="Proc. Natl. Acad. Sci. U.S.A.">
        <title>Amino acid sequence of ATP phosphoribosyltransferase of Salmonella typhimurium.</title>
        <authorList>
            <person name="Piszkiewicz D."/>
            <person name="Tilley B.E."/>
            <person name="Rand-Meir T."/>
            <person name="Parsons S.M."/>
        </authorList>
    </citation>
    <scope>PROTEIN SEQUENCE</scope>
</reference>
<reference key="2">
    <citation type="journal article" date="1988" name="J. Mol. Biol.">
        <title>Structure and function of the Salmonella typhimurium and Escherichia coli K-12 histidine operons.</title>
        <authorList>
            <person name="Carlomagno M.S."/>
            <person name="Chiariotti L."/>
            <person name="Alifano P."/>
            <person name="Nappo A.G."/>
            <person name="Bruni C.B."/>
        </authorList>
    </citation>
    <scope>NUCLEOTIDE SEQUENCE [GENOMIC DNA]</scope>
    <source>
        <strain>LT2</strain>
    </source>
</reference>
<reference key="3">
    <citation type="submission" date="1989-08" db="EMBL/GenBank/DDBJ databases">
        <authorList>
            <person name="Barnes W.M."/>
            <person name="Husson R.N."/>
            <person name="Whittier R."/>
        </authorList>
    </citation>
    <scope>NUCLEOTIDE SEQUENCE [GENOMIC DNA]</scope>
    <source>
        <strain>LT2</strain>
    </source>
</reference>
<reference key="4">
    <citation type="journal article" date="1989" name="J. Bacteriol.">
        <title>Features of the rho-dependent transcription termination polar element within the hisG cistron of Salmonella typhimurium.</title>
        <authorList>
            <person name="Ciampi M.S."/>
            <person name="Alifano P."/>
            <person name="Nappo A.G."/>
            <person name="Bruni C.B."/>
            <person name="Carlomagno M.S."/>
        </authorList>
    </citation>
    <scope>NUCLEOTIDE SEQUENCE [GENOMIC DNA]</scope>
</reference>
<reference key="5">
    <citation type="journal article" date="2001" name="Nature">
        <title>Complete genome sequence of Salmonella enterica serovar Typhimurium LT2.</title>
        <authorList>
            <person name="McClelland M."/>
            <person name="Sanderson K.E."/>
            <person name="Spieth J."/>
            <person name="Clifton S.W."/>
            <person name="Latreille P."/>
            <person name="Courtney L."/>
            <person name="Porwollik S."/>
            <person name="Ali J."/>
            <person name="Dante M."/>
            <person name="Du F."/>
            <person name="Hou S."/>
            <person name="Layman D."/>
            <person name="Leonard S."/>
            <person name="Nguyen C."/>
            <person name="Scott K."/>
            <person name="Holmes A."/>
            <person name="Grewal N."/>
            <person name="Mulvaney E."/>
            <person name="Ryan E."/>
            <person name="Sun H."/>
            <person name="Florea L."/>
            <person name="Miller W."/>
            <person name="Stoneking T."/>
            <person name="Nhan M."/>
            <person name="Waterston R."/>
            <person name="Wilson R.K."/>
        </authorList>
    </citation>
    <scope>NUCLEOTIDE SEQUENCE [LARGE SCALE GENOMIC DNA]</scope>
    <source>
        <strain>LT2 / SGSC1412 / ATCC 700720</strain>
    </source>
</reference>
<reference key="6">
    <citation type="journal article" date="1978" name="Proc. Natl. Acad. Sci. U.S.A.">
        <title>DNA sequence from the histidine operon control region: seven histidine codons in a row.</title>
        <authorList>
            <person name="Barnes W.M."/>
        </authorList>
    </citation>
    <scope>NUCLEOTIDE SEQUENCE [GENOMIC DNA] OF 1-13</scope>
    <source>
        <strain>LT2</strain>
    </source>
</reference>
<reference key="7">
    <citation type="journal article" date="1961" name="J. Biol. Chem.">
        <title>The first step of histidine biosynthesis.</title>
        <authorList>
            <person name="Ames B.N."/>
            <person name="Martin R.G."/>
            <person name="Garry B.J."/>
        </authorList>
    </citation>
    <scope>CATALYTIC ACTIVITY</scope>
    <scope>COFACTOR</scope>
    <scope>INHIBITION BY HISTIDINE</scope>
</reference>
<reference key="8">
    <citation type="journal article" date="1967" name="J. Biol. Chem.">
        <title>Purification and composition studies of phosphoribosyladenosine triphosphate:pyrophosphate phosphoribosyltransferase, the first enzyme of histidine biosynthesis.</title>
        <authorList>
            <person name="Voll M.J."/>
            <person name="Appella E."/>
            <person name="Martin R.G."/>
        </authorList>
    </citation>
    <scope>INHIBITION BY HISTIDINE</scope>
    <scope>SUBUNIT</scope>
    <source>
        <strain>LT2</strain>
    </source>
</reference>
<reference key="9">
    <citation type="journal article" date="1977" name="Arch. Biochem. Biophys.">
        <title>Inhibition of ATP phosphoribosyltransferase by AMP and ADP in the absence and presence of histidine.</title>
        <authorList>
            <person name="Morton D.P."/>
            <person name="Parsons S.M."/>
        </authorList>
    </citation>
    <scope>INHIBITION BY AMP AND ADP</scope>
</reference>
<reference key="10">
    <citation type="journal article" date="1977" name="Biochem. Biophys. Res. Commun.">
        <title>Synergistic inhibition of ATP phosphoribosyltransferase by guanosine tetraphosphate and histidine.</title>
        <authorList>
            <person name="Morton D.P."/>
            <person name="Parsons S.M."/>
        </authorList>
    </citation>
    <scope>REGULATION BY PPGPP</scope>
</reference>